<evidence type="ECO:0000255" key="1">
    <source>
        <dbReference type="HAMAP-Rule" id="MF_00406"/>
    </source>
</evidence>
<organism>
    <name type="scientific">Desulfotalea psychrophila (strain LSv54 / DSM 12343)</name>
    <dbReference type="NCBI Taxonomy" id="177439"/>
    <lineage>
        <taxon>Bacteria</taxon>
        <taxon>Pseudomonadati</taxon>
        <taxon>Thermodesulfobacteriota</taxon>
        <taxon>Desulfobulbia</taxon>
        <taxon>Desulfobulbales</taxon>
        <taxon>Desulfocapsaceae</taxon>
        <taxon>Desulfotalea</taxon>
    </lineage>
</organism>
<keyword id="KW-0963">Cytoplasm</keyword>
<keyword id="KW-0441">Lipid A biosynthesis</keyword>
<keyword id="KW-0444">Lipid biosynthesis</keyword>
<keyword id="KW-0443">Lipid metabolism</keyword>
<keyword id="KW-0456">Lyase</keyword>
<keyword id="KW-1185">Reference proteome</keyword>
<proteinExistence type="inferred from homology"/>
<protein>
    <recommendedName>
        <fullName evidence="1">3-hydroxyacyl-[acyl-carrier-protein] dehydratase FabZ</fullName>
        <ecNumber evidence="1">4.2.1.59</ecNumber>
    </recommendedName>
    <alternativeName>
        <fullName evidence="1">(3R)-hydroxymyristoyl-[acyl-carrier-protein] dehydratase</fullName>
        <shortName evidence="1">(3R)-hydroxymyristoyl-ACP dehydrase</shortName>
    </alternativeName>
    <alternativeName>
        <fullName evidence="1">Beta-hydroxyacyl-ACP dehydratase</fullName>
    </alternativeName>
</protein>
<gene>
    <name evidence="1" type="primary">fabZ</name>
    <name type="ordered locus">DP2944</name>
</gene>
<comment type="function">
    <text evidence="1">Involved in unsaturated fatty acids biosynthesis. Catalyzes the dehydration of short chain beta-hydroxyacyl-ACPs and long chain saturated and unsaturated beta-hydroxyacyl-ACPs.</text>
</comment>
<comment type="catalytic activity">
    <reaction evidence="1">
        <text>a (3R)-hydroxyacyl-[ACP] = a (2E)-enoyl-[ACP] + H2O</text>
        <dbReference type="Rhea" id="RHEA:13097"/>
        <dbReference type="Rhea" id="RHEA-COMP:9925"/>
        <dbReference type="Rhea" id="RHEA-COMP:9945"/>
        <dbReference type="ChEBI" id="CHEBI:15377"/>
        <dbReference type="ChEBI" id="CHEBI:78784"/>
        <dbReference type="ChEBI" id="CHEBI:78827"/>
        <dbReference type="EC" id="4.2.1.59"/>
    </reaction>
</comment>
<comment type="subcellular location">
    <subcellularLocation>
        <location evidence="1">Cytoplasm</location>
    </subcellularLocation>
</comment>
<comment type="similarity">
    <text evidence="1">Belongs to the thioester dehydratase family. FabZ subfamily.</text>
</comment>
<feature type="chain" id="PRO_0000091671" description="3-hydroxyacyl-[acyl-carrier-protein] dehydratase FabZ">
    <location>
        <begin position="1"/>
        <end position="150"/>
    </location>
</feature>
<feature type="active site" evidence="1">
    <location>
        <position position="56"/>
    </location>
</feature>
<dbReference type="EC" id="4.2.1.59" evidence="1"/>
<dbReference type="EMBL" id="CR522870">
    <property type="protein sequence ID" value="CAG37673.1"/>
    <property type="molecule type" value="Genomic_DNA"/>
</dbReference>
<dbReference type="RefSeq" id="WP_011190185.1">
    <property type="nucleotide sequence ID" value="NC_006138.1"/>
</dbReference>
<dbReference type="SMR" id="Q6AJ07"/>
<dbReference type="STRING" id="177439.DP2944"/>
<dbReference type="KEGG" id="dps:DP2944"/>
<dbReference type="eggNOG" id="COG0764">
    <property type="taxonomic scope" value="Bacteria"/>
</dbReference>
<dbReference type="HOGENOM" id="CLU_078912_1_0_7"/>
<dbReference type="OrthoDB" id="9772788at2"/>
<dbReference type="Proteomes" id="UP000000602">
    <property type="component" value="Chromosome"/>
</dbReference>
<dbReference type="GO" id="GO:0005737">
    <property type="term" value="C:cytoplasm"/>
    <property type="evidence" value="ECO:0007669"/>
    <property type="project" value="UniProtKB-SubCell"/>
</dbReference>
<dbReference type="GO" id="GO:0016020">
    <property type="term" value="C:membrane"/>
    <property type="evidence" value="ECO:0007669"/>
    <property type="project" value="GOC"/>
</dbReference>
<dbReference type="GO" id="GO:0019171">
    <property type="term" value="F:(3R)-hydroxyacyl-[acyl-carrier-protein] dehydratase activity"/>
    <property type="evidence" value="ECO:0007669"/>
    <property type="project" value="UniProtKB-EC"/>
</dbReference>
<dbReference type="GO" id="GO:0006633">
    <property type="term" value="P:fatty acid biosynthetic process"/>
    <property type="evidence" value="ECO:0007669"/>
    <property type="project" value="UniProtKB-UniRule"/>
</dbReference>
<dbReference type="GO" id="GO:0009245">
    <property type="term" value="P:lipid A biosynthetic process"/>
    <property type="evidence" value="ECO:0007669"/>
    <property type="project" value="UniProtKB-UniRule"/>
</dbReference>
<dbReference type="CDD" id="cd01288">
    <property type="entry name" value="FabZ"/>
    <property type="match status" value="1"/>
</dbReference>
<dbReference type="FunFam" id="3.10.129.10:FF:000001">
    <property type="entry name" value="3-hydroxyacyl-[acyl-carrier-protein] dehydratase FabZ"/>
    <property type="match status" value="1"/>
</dbReference>
<dbReference type="Gene3D" id="3.10.129.10">
    <property type="entry name" value="Hotdog Thioesterase"/>
    <property type="match status" value="1"/>
</dbReference>
<dbReference type="HAMAP" id="MF_00406">
    <property type="entry name" value="FabZ"/>
    <property type="match status" value="1"/>
</dbReference>
<dbReference type="InterPro" id="IPR013114">
    <property type="entry name" value="FabA_FabZ"/>
</dbReference>
<dbReference type="InterPro" id="IPR010084">
    <property type="entry name" value="FabZ"/>
</dbReference>
<dbReference type="InterPro" id="IPR029069">
    <property type="entry name" value="HotDog_dom_sf"/>
</dbReference>
<dbReference type="NCBIfam" id="TIGR01750">
    <property type="entry name" value="fabZ"/>
    <property type="match status" value="1"/>
</dbReference>
<dbReference type="NCBIfam" id="NF000582">
    <property type="entry name" value="PRK00006.1"/>
    <property type="match status" value="1"/>
</dbReference>
<dbReference type="PANTHER" id="PTHR30272">
    <property type="entry name" value="3-HYDROXYACYL-[ACYL-CARRIER-PROTEIN] DEHYDRATASE"/>
    <property type="match status" value="1"/>
</dbReference>
<dbReference type="PANTHER" id="PTHR30272:SF1">
    <property type="entry name" value="3-HYDROXYACYL-[ACYL-CARRIER-PROTEIN] DEHYDRATASE"/>
    <property type="match status" value="1"/>
</dbReference>
<dbReference type="Pfam" id="PF07977">
    <property type="entry name" value="FabA"/>
    <property type="match status" value="1"/>
</dbReference>
<dbReference type="SUPFAM" id="SSF54637">
    <property type="entry name" value="Thioesterase/thiol ester dehydrase-isomerase"/>
    <property type="match status" value="1"/>
</dbReference>
<sequence length="150" mass="16687">MSDVITPGEIDIVGILDLLPHRYPFVMVDRILSIDPGKEIVGLKNVTFNEQYFQGHFPGEPVMPGVLMLEGLAQVGCVHAFYTEPDAVGKKLAFFAGVDKARFRKPVRPGDQLIYKVQLVKEKRSIIFMSAKGYVDDQVVVQAELMASFS</sequence>
<name>FABZ_DESPS</name>
<reference key="1">
    <citation type="journal article" date="2004" name="Environ. Microbiol.">
        <title>The genome of Desulfotalea psychrophila, a sulfate-reducing bacterium from permanently cold Arctic sediments.</title>
        <authorList>
            <person name="Rabus R."/>
            <person name="Ruepp A."/>
            <person name="Frickey T."/>
            <person name="Rattei T."/>
            <person name="Fartmann B."/>
            <person name="Stark M."/>
            <person name="Bauer M."/>
            <person name="Zibat A."/>
            <person name="Lombardot T."/>
            <person name="Becker I."/>
            <person name="Amann J."/>
            <person name="Gellner K."/>
            <person name="Teeling H."/>
            <person name="Leuschner W.D."/>
            <person name="Gloeckner F.-O."/>
            <person name="Lupas A.N."/>
            <person name="Amann R."/>
            <person name="Klenk H.-P."/>
        </authorList>
    </citation>
    <scope>NUCLEOTIDE SEQUENCE [LARGE SCALE GENOMIC DNA]</scope>
    <source>
        <strain>DSM 12343 / LSv54</strain>
    </source>
</reference>
<accession>Q6AJ07</accession>